<proteinExistence type="inferred from homology"/>
<sequence>MAKHLYKTPIPSTRKGTVDRQVKSNPRNNLIHGRHRCGKGRNSRGIITARHRGGGHKRLYRKIDFRRNQKDISGRIVTIEYDPNRNAYICLIHYGDGEKRYILHPRGAIIGDTIVSGTKVPISMGNALPLTDMPLGTAMHNIEITRGRGGQLARAAGAVAKLIAKEGKSATLRLPSGEVRLVSQNCLATVGQVGNVGVNQKSLGRAGSKCWLGKRPVVRGVVMNPVDHPHGGGEGKAPIGRKKPTTPWGYPALGRRTRKRKKYSDSFILRRRK</sequence>
<evidence type="ECO:0000250" key="1"/>
<evidence type="ECO:0000255" key="2">
    <source>
        <dbReference type="HAMAP-Rule" id="MF_01320"/>
    </source>
</evidence>
<evidence type="ECO:0000256" key="3">
    <source>
        <dbReference type="SAM" id="MobiDB-lite"/>
    </source>
</evidence>
<evidence type="ECO:0000305" key="4"/>
<protein>
    <recommendedName>
        <fullName evidence="2">Large ribosomal subunit protein uL2cz/uL2cy</fullName>
    </recommendedName>
    <alternativeName>
        <fullName evidence="4">50S ribosomal protein L2, chloroplastic</fullName>
    </alternativeName>
</protein>
<comment type="subunit">
    <text evidence="1">Part of the 50S ribosomal subunit.</text>
</comment>
<comment type="subcellular location">
    <subcellularLocation>
        <location>Plastid</location>
        <location>Chloroplast</location>
    </subcellularLocation>
</comment>
<comment type="similarity">
    <text evidence="4">Belongs to the universal ribosomal protein uL2 family.</text>
</comment>
<feature type="chain" id="PRO_0000342542" description="Large ribosomal subunit protein uL2cz/uL2cy">
    <location>
        <begin position="1"/>
        <end position="273"/>
    </location>
</feature>
<feature type="region of interest" description="Disordered" evidence="3">
    <location>
        <begin position="1"/>
        <end position="27"/>
    </location>
</feature>
<feature type="region of interest" description="Disordered" evidence="3">
    <location>
        <begin position="225"/>
        <end position="273"/>
    </location>
</feature>
<dbReference type="EMBL" id="AM777385">
    <property type="protein sequence ID" value="CAO86017.1"/>
    <property type="molecule type" value="Genomic_DNA"/>
</dbReference>
<dbReference type="EMBL" id="AM777385">
    <property type="protein sequence ID" value="CAO86037.3"/>
    <property type="molecule type" value="Genomic_DNA"/>
</dbReference>
<dbReference type="SMR" id="A8Y9C8"/>
<dbReference type="KEGG" id="lper:5696570"/>
<dbReference type="KEGG" id="lper:5696658"/>
<dbReference type="GO" id="GO:0009507">
    <property type="term" value="C:chloroplast"/>
    <property type="evidence" value="ECO:0007669"/>
    <property type="project" value="UniProtKB-SubCell"/>
</dbReference>
<dbReference type="GO" id="GO:0005762">
    <property type="term" value="C:mitochondrial large ribosomal subunit"/>
    <property type="evidence" value="ECO:0007669"/>
    <property type="project" value="TreeGrafter"/>
</dbReference>
<dbReference type="GO" id="GO:0019843">
    <property type="term" value="F:rRNA binding"/>
    <property type="evidence" value="ECO:0007669"/>
    <property type="project" value="UniProtKB-UniRule"/>
</dbReference>
<dbReference type="GO" id="GO:0003735">
    <property type="term" value="F:structural constituent of ribosome"/>
    <property type="evidence" value="ECO:0007669"/>
    <property type="project" value="InterPro"/>
</dbReference>
<dbReference type="GO" id="GO:0016740">
    <property type="term" value="F:transferase activity"/>
    <property type="evidence" value="ECO:0007669"/>
    <property type="project" value="InterPro"/>
</dbReference>
<dbReference type="GO" id="GO:0032543">
    <property type="term" value="P:mitochondrial translation"/>
    <property type="evidence" value="ECO:0007669"/>
    <property type="project" value="TreeGrafter"/>
</dbReference>
<dbReference type="FunFam" id="4.10.950.10:FF:000001">
    <property type="entry name" value="50S ribosomal protein L2"/>
    <property type="match status" value="1"/>
</dbReference>
<dbReference type="FunFam" id="2.30.30.30:FF:000008">
    <property type="entry name" value="50S ribosomal protein L2, chloroplastic"/>
    <property type="match status" value="1"/>
</dbReference>
<dbReference type="FunFam" id="2.40.50.140:FF:000029">
    <property type="entry name" value="50S ribosomal protein L2, chloroplastic"/>
    <property type="match status" value="1"/>
</dbReference>
<dbReference type="Gene3D" id="2.30.30.30">
    <property type="match status" value="1"/>
</dbReference>
<dbReference type="Gene3D" id="2.40.50.140">
    <property type="entry name" value="Nucleic acid-binding proteins"/>
    <property type="match status" value="1"/>
</dbReference>
<dbReference type="Gene3D" id="4.10.950.10">
    <property type="entry name" value="Ribosomal protein L2, domain 3"/>
    <property type="match status" value="1"/>
</dbReference>
<dbReference type="HAMAP" id="MF_01320_B">
    <property type="entry name" value="Ribosomal_uL2_B"/>
    <property type="match status" value="1"/>
</dbReference>
<dbReference type="InterPro" id="IPR012340">
    <property type="entry name" value="NA-bd_OB-fold"/>
</dbReference>
<dbReference type="InterPro" id="IPR014722">
    <property type="entry name" value="Rib_uL2_dom2"/>
</dbReference>
<dbReference type="InterPro" id="IPR002171">
    <property type="entry name" value="Ribosomal_uL2"/>
</dbReference>
<dbReference type="InterPro" id="IPR005880">
    <property type="entry name" value="Ribosomal_uL2_bac/org-type"/>
</dbReference>
<dbReference type="InterPro" id="IPR022669">
    <property type="entry name" value="Ribosomal_uL2_C"/>
</dbReference>
<dbReference type="InterPro" id="IPR022671">
    <property type="entry name" value="Ribosomal_uL2_CS"/>
</dbReference>
<dbReference type="InterPro" id="IPR014726">
    <property type="entry name" value="Ribosomal_uL2_dom3"/>
</dbReference>
<dbReference type="InterPro" id="IPR022666">
    <property type="entry name" value="Ribosomal_uL2_RNA-bd_dom"/>
</dbReference>
<dbReference type="InterPro" id="IPR008991">
    <property type="entry name" value="Translation_prot_SH3-like_sf"/>
</dbReference>
<dbReference type="NCBIfam" id="TIGR01171">
    <property type="entry name" value="rplB_bact"/>
    <property type="match status" value="1"/>
</dbReference>
<dbReference type="PANTHER" id="PTHR13691:SF57">
    <property type="entry name" value="LARGE RIBOSOMAL SUBUNIT PROTEIN UL2CZ_UL2CY"/>
    <property type="match status" value="1"/>
</dbReference>
<dbReference type="PANTHER" id="PTHR13691">
    <property type="entry name" value="RIBOSOMAL PROTEIN L2"/>
    <property type="match status" value="1"/>
</dbReference>
<dbReference type="Pfam" id="PF00181">
    <property type="entry name" value="Ribosomal_L2"/>
    <property type="match status" value="1"/>
</dbReference>
<dbReference type="Pfam" id="PF03947">
    <property type="entry name" value="Ribosomal_L2_C"/>
    <property type="match status" value="1"/>
</dbReference>
<dbReference type="PIRSF" id="PIRSF002158">
    <property type="entry name" value="Ribosomal_L2"/>
    <property type="match status" value="1"/>
</dbReference>
<dbReference type="SMART" id="SM01383">
    <property type="entry name" value="Ribosomal_L2"/>
    <property type="match status" value="1"/>
</dbReference>
<dbReference type="SMART" id="SM01382">
    <property type="entry name" value="Ribosomal_L2_C"/>
    <property type="match status" value="1"/>
</dbReference>
<dbReference type="SUPFAM" id="SSF50249">
    <property type="entry name" value="Nucleic acid-binding proteins"/>
    <property type="match status" value="1"/>
</dbReference>
<dbReference type="SUPFAM" id="SSF50104">
    <property type="entry name" value="Translation proteins SH3-like domain"/>
    <property type="match status" value="1"/>
</dbReference>
<dbReference type="PROSITE" id="PS00467">
    <property type="entry name" value="RIBOSOMAL_L2"/>
    <property type="match status" value="1"/>
</dbReference>
<accession>A8Y9C8</accession>
<accession>A8Y9E8</accession>
<geneLocation type="chloroplast"/>
<name>RK2_LOLPR</name>
<keyword id="KW-0150">Chloroplast</keyword>
<keyword id="KW-0934">Plastid</keyword>
<keyword id="KW-0687">Ribonucleoprotein</keyword>
<keyword id="KW-0689">Ribosomal protein</keyword>
<reference key="1">
    <citation type="journal article" date="2008" name="PLoS ONE">
        <title>An optimized chloroplast DNA extraction protocol for grasses (Poaceae) proves suitable for whole plastid genome sequencing and SNP detection.</title>
        <authorList>
            <person name="Diekmann K."/>
            <person name="Hodkinson T.R."/>
            <person name="Fricke E."/>
            <person name="Barth S."/>
        </authorList>
    </citation>
    <scope>NUCLEOTIDE SEQUENCE [LARGE SCALE GENOMIC DNA]</scope>
    <source>
        <strain>cv. Cashel</strain>
    </source>
</reference>
<gene>
    <name type="primary">rpl2-A</name>
    <name type="ordered locus">LopeCp084</name>
</gene>
<gene>
    <name type="primary">rpl2-B</name>
    <name type="ordered locus">LopeCp129</name>
</gene>
<organism>
    <name type="scientific">Lolium perenne</name>
    <name type="common">Perennial ryegrass</name>
    <dbReference type="NCBI Taxonomy" id="4522"/>
    <lineage>
        <taxon>Eukaryota</taxon>
        <taxon>Viridiplantae</taxon>
        <taxon>Streptophyta</taxon>
        <taxon>Embryophyta</taxon>
        <taxon>Tracheophyta</taxon>
        <taxon>Spermatophyta</taxon>
        <taxon>Magnoliopsida</taxon>
        <taxon>Liliopsida</taxon>
        <taxon>Poales</taxon>
        <taxon>Poaceae</taxon>
        <taxon>BOP clade</taxon>
        <taxon>Pooideae</taxon>
        <taxon>Poodae</taxon>
        <taxon>Poeae</taxon>
        <taxon>Poeae Chloroplast Group 2 (Poeae type)</taxon>
        <taxon>Loliodinae</taxon>
        <taxon>Loliinae</taxon>
        <taxon>Lolium</taxon>
    </lineage>
</organism>